<reference key="1">
    <citation type="journal article" date="1997" name="Science">
        <title>The complete genome sequence of Escherichia coli K-12.</title>
        <authorList>
            <person name="Blattner F.R."/>
            <person name="Plunkett G. III"/>
            <person name="Bloch C.A."/>
            <person name="Perna N.T."/>
            <person name="Burland V."/>
            <person name="Riley M."/>
            <person name="Collado-Vides J."/>
            <person name="Glasner J.D."/>
            <person name="Rode C.K."/>
            <person name="Mayhew G.F."/>
            <person name="Gregor J."/>
            <person name="Davis N.W."/>
            <person name="Kirkpatrick H.A."/>
            <person name="Goeden M.A."/>
            <person name="Rose D.J."/>
            <person name="Mau B."/>
            <person name="Shao Y."/>
        </authorList>
    </citation>
    <scope>NUCLEOTIDE SEQUENCE [LARGE SCALE GENOMIC DNA]</scope>
    <source>
        <strain>K12 / MG1655 / ATCC 47076</strain>
    </source>
</reference>
<reference key="2">
    <citation type="journal article" date="2006" name="Mol. Syst. Biol.">
        <title>Highly accurate genome sequences of Escherichia coli K-12 strains MG1655 and W3110.</title>
        <authorList>
            <person name="Hayashi K."/>
            <person name="Morooka N."/>
            <person name="Yamamoto Y."/>
            <person name="Fujita K."/>
            <person name="Isono K."/>
            <person name="Choi S."/>
            <person name="Ohtsubo E."/>
            <person name="Baba T."/>
            <person name="Wanner B.L."/>
            <person name="Mori H."/>
            <person name="Horiuchi T."/>
        </authorList>
    </citation>
    <scope>NUCLEOTIDE SEQUENCE [LARGE SCALE GENOMIC DNA]</scope>
    <source>
        <strain>K12 / W3110 / ATCC 27325 / DSM 5911</strain>
    </source>
</reference>
<reference key="3">
    <citation type="journal article" date="2018" name="Biochemistry">
        <title>Comparative membrane proteomics reveals a nonannotated E. coli heat shock protein.</title>
        <authorList>
            <person name="Yuan P."/>
            <person name="D'Lima N.G."/>
            <person name="Slavoff S.A."/>
        </authorList>
    </citation>
    <scope>PROTEIN SEQUENCE OF 73-91</scope>
    <scope>IDENTIFICATION</scope>
    <scope>INDUCTION BY HEAT SHOCK</scope>
    <source>
        <strain>K12 / MG1655 / ATCC 47076</strain>
    </source>
</reference>
<organism>
    <name type="scientific">Escherichia coli (strain K12)</name>
    <dbReference type="NCBI Taxonomy" id="83333"/>
    <lineage>
        <taxon>Bacteria</taxon>
        <taxon>Pseudomonadati</taxon>
        <taxon>Pseudomonadota</taxon>
        <taxon>Gammaproteobacteria</taxon>
        <taxon>Enterobacterales</taxon>
        <taxon>Enterobacteriaceae</taxon>
        <taxon>Escherichia</taxon>
    </lineage>
</organism>
<evidence type="ECO:0000250" key="1">
    <source>
        <dbReference type="UniProtKB" id="E3PJ88"/>
    </source>
</evidence>
<evidence type="ECO:0000255" key="2">
    <source>
        <dbReference type="PROSITE-ProRule" id="PRU00303"/>
    </source>
</evidence>
<evidence type="ECO:0000269" key="3">
    <source>
    </source>
</evidence>
<evidence type="ECO:0000305" key="4"/>
<dbReference type="EMBL" id="U28377">
    <property type="protein sequence ID" value="AAA69138.1"/>
    <property type="molecule type" value="Genomic_DNA"/>
</dbReference>
<dbReference type="EMBL" id="U00096">
    <property type="protein sequence ID" value="AAC76007.1"/>
    <property type="molecule type" value="Genomic_DNA"/>
</dbReference>
<dbReference type="EMBL" id="AP009048">
    <property type="protein sequence ID" value="BAE77032.1"/>
    <property type="molecule type" value="Genomic_DNA"/>
</dbReference>
<dbReference type="PIR" id="A65083">
    <property type="entry name" value="A65083"/>
</dbReference>
<dbReference type="RefSeq" id="NP_417445.1">
    <property type="nucleotide sequence ID" value="NC_000913.3"/>
</dbReference>
<dbReference type="SMR" id="Q46835"/>
<dbReference type="BioGRID" id="4262363">
    <property type="interactions" value="12"/>
</dbReference>
<dbReference type="FunCoup" id="Q46835">
    <property type="interactions" value="45"/>
</dbReference>
<dbReference type="STRING" id="511145.b2971"/>
<dbReference type="PaxDb" id="511145-b2971"/>
<dbReference type="EnsemblBacteria" id="AAC76007">
    <property type="protein sequence ID" value="AAC76007"/>
    <property type="gene ID" value="b2971"/>
</dbReference>
<dbReference type="GeneID" id="947470"/>
<dbReference type="KEGG" id="ecj:JW2938"/>
<dbReference type="KEGG" id="eco:b2971"/>
<dbReference type="KEGG" id="ecoc:C3026_16255"/>
<dbReference type="PATRIC" id="fig|1411691.4.peg.3760"/>
<dbReference type="EchoBASE" id="EB2815"/>
<dbReference type="eggNOG" id="ENOG502ZG1M">
    <property type="taxonomic scope" value="Bacteria"/>
</dbReference>
<dbReference type="HOGENOM" id="CLU_156494_0_0_6"/>
<dbReference type="InParanoid" id="Q46835"/>
<dbReference type="OMA" id="HQANKIN"/>
<dbReference type="OrthoDB" id="6572678at2"/>
<dbReference type="BioCyc" id="EcoCyc:G7538-MONOMER"/>
<dbReference type="PRO" id="PR:Q46835"/>
<dbReference type="Proteomes" id="UP000000625">
    <property type="component" value="Chromosome"/>
</dbReference>
<dbReference type="GO" id="GO:0009279">
    <property type="term" value="C:cell outer membrane"/>
    <property type="evidence" value="ECO:0000250"/>
    <property type="project" value="EcoCyc"/>
</dbReference>
<dbReference type="GO" id="GO:0006974">
    <property type="term" value="P:DNA damage response"/>
    <property type="evidence" value="ECO:0000270"/>
    <property type="project" value="EcoliWiki"/>
</dbReference>
<dbReference type="FunFam" id="3.30.300.250:FF:000001">
    <property type="entry name" value="Lipoprotein YghG"/>
    <property type="match status" value="1"/>
</dbReference>
<dbReference type="Gene3D" id="3.30.300.250">
    <property type="match status" value="1"/>
</dbReference>
<dbReference type="InterPro" id="IPR016502">
    <property type="entry name" value="T2SSS_2"/>
</dbReference>
<dbReference type="Pfam" id="PF16549">
    <property type="entry name" value="T2SSS_2"/>
    <property type="match status" value="1"/>
</dbReference>
<dbReference type="PIRSF" id="PIRSF007010">
    <property type="entry name" value="UCP007010"/>
    <property type="match status" value="1"/>
</dbReference>
<dbReference type="PROSITE" id="PS51257">
    <property type="entry name" value="PROKAR_LIPOPROTEIN"/>
    <property type="match status" value="1"/>
</dbReference>
<proteinExistence type="evidence at protein level"/>
<accession>Q46835</accession>
<accession>Q2M9M4</accession>
<keyword id="KW-0998">Cell outer membrane</keyword>
<keyword id="KW-0903">Direct protein sequencing</keyword>
<keyword id="KW-0449">Lipoprotein</keyword>
<keyword id="KW-0472">Membrane</keyword>
<keyword id="KW-0564">Palmitate</keyword>
<keyword id="KW-1185">Reference proteome</keyword>
<keyword id="KW-0732">Signal</keyword>
<keyword id="KW-0346">Stress response</keyword>
<protein>
    <recommendedName>
        <fullName>Lipoprotein YghG</fullName>
    </recommendedName>
    <alternativeName>
        <fullName evidence="4">Putative pilotin YghG</fullName>
    </alternativeName>
</protein>
<gene>
    <name type="primary">yghG</name>
    <name type="ordered locus">b2971</name>
    <name type="ordered locus">JW2938</name>
</gene>
<comment type="function">
    <text evidence="4">Involved in a type II secretion system (T2SS, formerly general secretion pathway, GSP) for the export of folded proteins across the outer membrane. In a functional T2SS this subunit helps assemble the outer membrane channel.</text>
</comment>
<comment type="subcellular location">
    <subcellularLocation>
        <location evidence="1">Cell outer membrane</location>
        <topology evidence="2">Lipid-anchor</topology>
    </subcellularLocation>
</comment>
<comment type="induction">
    <text evidence="3">By heat shock (shift from 30 to 45 degrees Celsius) (at protein level).</text>
</comment>
<comment type="miscellaneous">
    <text evidence="4">In many other E.coli strains this gene is part of a type II secretion system, but in MG1655 the locus is missing a number of genes.</text>
</comment>
<comment type="similarity">
    <text evidence="4">Belongs to the GspS/AspS pilotin family.</text>
</comment>
<sequence length="136" mass="14670">MSIKQMPGRVLISLLLSVTGLLSGCASHNENASLLAKKQAQNISQNLPIKSAGYTLVLAQSSGTTVKMTIISEAGTQTTQTPDAFLTSYQRQMCADPTVKLMITEGINYSITINDTRTGNQYQRKLDRTTCGIVKA</sequence>
<name>YGHG_ECOLI</name>
<feature type="signal peptide" evidence="2">
    <location>
        <begin position="1"/>
        <end position="24"/>
    </location>
</feature>
<feature type="chain" id="PRO_0000013898" description="Lipoprotein YghG">
    <location>
        <begin position="25"/>
        <end position="136"/>
    </location>
</feature>
<feature type="lipid moiety-binding region" description="N-palmitoyl cysteine" evidence="2">
    <location>
        <position position="25"/>
    </location>
</feature>
<feature type="lipid moiety-binding region" description="S-diacylglycerol cysteine" evidence="2">
    <location>
        <position position="25"/>
    </location>
</feature>